<feature type="chain" id="PRO_0000338627" description="Cell cycle link protein">
    <location>
        <begin position="1"/>
        <end position="169"/>
    </location>
</feature>
<feature type="region of interest" description="Binding to host SKP1 protein" evidence="2">
    <location>
        <begin position="9"/>
        <end position="22"/>
    </location>
</feature>
<feature type="short sequence motif" description="LXCXE motif, interaction with host RBR" evidence="1">
    <location>
        <begin position="110"/>
        <end position="114"/>
    </location>
</feature>
<keyword id="KW-0945">Host-virus interaction</keyword>
<keyword id="KW-1185">Reference proteome</keyword>
<reference key="1">
    <citation type="journal article" date="1998" name="J. Gen. Virol.">
        <title>Ten distinct circular ssDNA components, four of which encode putative replication-associated proteins, are associated with the faba bean necrotic yellows virus genome.</title>
        <authorList>
            <person name="Katul L."/>
            <person name="Timchenko T."/>
            <person name="Gronenborn B."/>
            <person name="Vetten H.J."/>
        </authorList>
    </citation>
    <scope>NUCLEOTIDE SEQUENCE [GENOMIC DNA]</scope>
</reference>
<evidence type="ECO:0000250" key="1"/>
<evidence type="ECO:0000255" key="2"/>
<evidence type="ECO:0000305" key="3"/>
<comment type="function">
    <text evidence="1">Interacts with and disrupts the function of host retinoblastoma-related proteins RBR, which are key regulators of the cell cycle. Induces transcriptional activation of E2F-regulated S-phase and G2/M-phase-specific genes. Inactivation of the ability of RBR to arrest the cell cycle leads to the stimulation of viral DNA replication (By similarity).</text>
</comment>
<comment type="subunit">
    <text evidence="1">Interacts with host SKP1. Interacts (via LXCXE domain) with host retinoblastoma-related protein 1 (RBR1). Interacts (via LXCXE domain) with retinoblastoma-related proteins (RBR) (By similarity).</text>
</comment>
<comment type="similarity">
    <text evidence="3">Belongs to the nanovirus Clink protein family.</text>
</comment>
<gene>
    <name type="primary">DNA-C</name>
    <name type="synonym">C10</name>
</gene>
<name>CLINK_FBNY2</name>
<accession>O91253</accession>
<organismHost>
    <name type="scientific">Cicer arietinum</name>
    <name type="common">Chickpea</name>
    <name type="synonym">Garbanzo</name>
    <dbReference type="NCBI Taxonomy" id="3827"/>
</organismHost>
<organismHost>
    <name type="scientific">Lens culinaris</name>
    <name type="common">Lentil</name>
    <name type="synonym">Cicer lens</name>
    <dbReference type="NCBI Taxonomy" id="3864"/>
</organismHost>
<organismHost>
    <name type="scientific">Phaseolus vulgaris</name>
    <name type="common">Kidney bean</name>
    <name type="synonym">French bean</name>
    <dbReference type="NCBI Taxonomy" id="3885"/>
</organismHost>
<organismHost>
    <name type="scientific">Vicia faba</name>
    <name type="common">Broad bean</name>
    <name type="synonym">Faba vulgaris</name>
    <dbReference type="NCBI Taxonomy" id="3906"/>
</organismHost>
<sequence>MGLKYFSHLPEELRQKIVHDHLQQERKKEFLEKAIEDSCRRHVSLLKSDPSPSELYALSKFLDSLADYVGKQFNTRCLIKWKKDVPANIKFEVMEEQHLRLYGFVDMDDLLCREVLPPEEDDDITYEDGMIVNCSELDKLFEALGIKVVYITVSKNCICTPLNKDIVIS</sequence>
<protein>
    <recommendedName>
        <fullName>Cell cycle link protein</fullName>
        <shortName>Clink</shortName>
    </recommendedName>
</protein>
<dbReference type="EMBL" id="AJ005967">
    <property type="protein sequence ID" value="CAA06790.1"/>
    <property type="molecule type" value="Genomic_DNA"/>
</dbReference>
<dbReference type="SMR" id="O91253"/>
<dbReference type="Proteomes" id="UP001515460">
    <property type="component" value="Genome"/>
</dbReference>
<organism>
    <name type="scientific">Faba bean necrotic yellows virus (isolate Syrian SV292-88)</name>
    <name type="common">FBNYV</name>
    <dbReference type="NCBI Taxonomy" id="291604"/>
    <lineage>
        <taxon>Viruses</taxon>
        <taxon>Monodnaviria</taxon>
        <taxon>Shotokuvirae</taxon>
        <taxon>Cressdnaviricota</taxon>
        <taxon>Arfiviricetes</taxon>
        <taxon>Mulpavirales</taxon>
        <taxon>Nanoviridae</taxon>
        <taxon>Nanovirus</taxon>
        <taxon>Faba bean necrotic yellows virus</taxon>
    </lineage>
</organism>
<proteinExistence type="inferred from homology"/>